<gene>
    <name evidence="1" type="primary">htpX</name>
    <name type="ordered locus">Cphamn1_2395</name>
</gene>
<feature type="chain" id="PRO_1000098815" description="Protease HtpX homolog">
    <location>
        <begin position="1"/>
        <end position="303"/>
    </location>
</feature>
<feature type="transmembrane region" description="Helical" evidence="1">
    <location>
        <begin position="4"/>
        <end position="24"/>
    </location>
</feature>
<feature type="transmembrane region" description="Helical" evidence="1">
    <location>
        <begin position="38"/>
        <end position="58"/>
    </location>
</feature>
<feature type="transmembrane region" description="Helical" evidence="1">
    <location>
        <begin position="152"/>
        <end position="172"/>
    </location>
</feature>
<feature type="transmembrane region" description="Helical" evidence="1">
    <location>
        <begin position="199"/>
        <end position="219"/>
    </location>
</feature>
<feature type="active site" evidence="1">
    <location>
        <position position="145"/>
    </location>
</feature>
<feature type="binding site" evidence="1">
    <location>
        <position position="144"/>
    </location>
    <ligand>
        <name>Zn(2+)</name>
        <dbReference type="ChEBI" id="CHEBI:29105"/>
        <note>catalytic</note>
    </ligand>
</feature>
<feature type="binding site" evidence="1">
    <location>
        <position position="148"/>
    </location>
    <ligand>
        <name>Zn(2+)</name>
        <dbReference type="ChEBI" id="CHEBI:29105"/>
        <note>catalytic</note>
    </ligand>
</feature>
<feature type="binding site" evidence="1">
    <location>
        <position position="224"/>
    </location>
    <ligand>
        <name>Zn(2+)</name>
        <dbReference type="ChEBI" id="CHEBI:29105"/>
        <note>catalytic</note>
    </ligand>
</feature>
<comment type="cofactor">
    <cofactor evidence="1">
        <name>Zn(2+)</name>
        <dbReference type="ChEBI" id="CHEBI:29105"/>
    </cofactor>
    <text evidence="1">Binds 1 zinc ion per subunit.</text>
</comment>
<comment type="subcellular location">
    <subcellularLocation>
        <location evidence="1">Cell inner membrane</location>
        <topology evidence="1">Multi-pass membrane protein</topology>
    </subcellularLocation>
</comment>
<comment type="similarity">
    <text evidence="1">Belongs to the peptidase M48B family.</text>
</comment>
<evidence type="ECO:0000255" key="1">
    <source>
        <dbReference type="HAMAP-Rule" id="MF_00188"/>
    </source>
</evidence>
<reference key="1">
    <citation type="submission" date="2008-06" db="EMBL/GenBank/DDBJ databases">
        <title>Complete sequence of Chlorobium phaeobacteroides BS1.</title>
        <authorList>
            <consortium name="US DOE Joint Genome Institute"/>
            <person name="Lucas S."/>
            <person name="Copeland A."/>
            <person name="Lapidus A."/>
            <person name="Glavina del Rio T."/>
            <person name="Dalin E."/>
            <person name="Tice H."/>
            <person name="Bruce D."/>
            <person name="Goodwin L."/>
            <person name="Pitluck S."/>
            <person name="Schmutz J."/>
            <person name="Larimer F."/>
            <person name="Land M."/>
            <person name="Hauser L."/>
            <person name="Kyrpides N."/>
            <person name="Ovchinnikova G."/>
            <person name="Li T."/>
            <person name="Liu Z."/>
            <person name="Zhao F."/>
            <person name="Overmann J."/>
            <person name="Bryant D.A."/>
            <person name="Richardson P."/>
        </authorList>
    </citation>
    <scope>NUCLEOTIDE SEQUENCE [LARGE SCALE GENOMIC DNA]</scope>
    <source>
        <strain>BS1</strain>
    </source>
</reference>
<organism>
    <name type="scientific">Chlorobium phaeobacteroides (strain BS1)</name>
    <dbReference type="NCBI Taxonomy" id="331678"/>
    <lineage>
        <taxon>Bacteria</taxon>
        <taxon>Pseudomonadati</taxon>
        <taxon>Chlorobiota</taxon>
        <taxon>Chlorobiia</taxon>
        <taxon>Chlorobiales</taxon>
        <taxon>Chlorobiaceae</taxon>
        <taxon>Chlorobium/Pelodictyon group</taxon>
        <taxon>Chlorobium</taxon>
    </lineage>
</organism>
<sequence length="303" mass="32228">MKRVVLFLLTNLAVIAVLSITARILGVDRFLTANGLNMGMLLAFAALIGFGGAFISLLMSKTMAKWSTRARVIERPGNQDEAWLVDTVRQLSKKAGLPMPEVAIFDGAPNAFATGASKSKSLVAVSTGLLQSMDRKQVAAVLAHEVAHVENGDMVTLTLIQGVVNTFVIFLSRALGYLVDNFLRGDNEESTGPGIGYWISSIAFEIVFGVLASIVVMYFSRKREFRADAGAAKLMGDRRPMIDALRTLGGLQAGQLPKEMAASGIAGGGMMALFSSHPPLESRIAALESATPPSTPTPSRRGS</sequence>
<keyword id="KW-0997">Cell inner membrane</keyword>
<keyword id="KW-1003">Cell membrane</keyword>
<keyword id="KW-0378">Hydrolase</keyword>
<keyword id="KW-0472">Membrane</keyword>
<keyword id="KW-0479">Metal-binding</keyword>
<keyword id="KW-0482">Metalloprotease</keyword>
<keyword id="KW-0645">Protease</keyword>
<keyword id="KW-0812">Transmembrane</keyword>
<keyword id="KW-1133">Transmembrane helix</keyword>
<keyword id="KW-0862">Zinc</keyword>
<name>HTPX_CHLPB</name>
<proteinExistence type="inferred from homology"/>
<protein>
    <recommendedName>
        <fullName evidence="1">Protease HtpX homolog</fullName>
        <ecNumber evidence="1">3.4.24.-</ecNumber>
    </recommendedName>
</protein>
<dbReference type="EC" id="3.4.24.-" evidence="1"/>
<dbReference type="EMBL" id="CP001101">
    <property type="protein sequence ID" value="ACE05293.1"/>
    <property type="molecule type" value="Genomic_DNA"/>
</dbReference>
<dbReference type="SMR" id="B3EPQ3"/>
<dbReference type="STRING" id="331678.Cphamn1_2395"/>
<dbReference type="MEROPS" id="M48.002"/>
<dbReference type="KEGG" id="cpb:Cphamn1_2395"/>
<dbReference type="eggNOG" id="COG0501">
    <property type="taxonomic scope" value="Bacteria"/>
</dbReference>
<dbReference type="HOGENOM" id="CLU_042266_1_0_10"/>
<dbReference type="OrthoDB" id="9810445at2"/>
<dbReference type="GO" id="GO:0005886">
    <property type="term" value="C:plasma membrane"/>
    <property type="evidence" value="ECO:0007669"/>
    <property type="project" value="UniProtKB-SubCell"/>
</dbReference>
<dbReference type="GO" id="GO:0004222">
    <property type="term" value="F:metalloendopeptidase activity"/>
    <property type="evidence" value="ECO:0007669"/>
    <property type="project" value="UniProtKB-UniRule"/>
</dbReference>
<dbReference type="GO" id="GO:0008270">
    <property type="term" value="F:zinc ion binding"/>
    <property type="evidence" value="ECO:0007669"/>
    <property type="project" value="UniProtKB-UniRule"/>
</dbReference>
<dbReference type="GO" id="GO:0006508">
    <property type="term" value="P:proteolysis"/>
    <property type="evidence" value="ECO:0007669"/>
    <property type="project" value="UniProtKB-KW"/>
</dbReference>
<dbReference type="CDD" id="cd07335">
    <property type="entry name" value="M48B_HtpX_like"/>
    <property type="match status" value="1"/>
</dbReference>
<dbReference type="Gene3D" id="3.30.2010.10">
    <property type="entry name" value="Metalloproteases ('zincins'), catalytic domain"/>
    <property type="match status" value="1"/>
</dbReference>
<dbReference type="HAMAP" id="MF_00188">
    <property type="entry name" value="Pept_M48_protease_HtpX"/>
    <property type="match status" value="1"/>
</dbReference>
<dbReference type="InterPro" id="IPR050083">
    <property type="entry name" value="HtpX_protease"/>
</dbReference>
<dbReference type="InterPro" id="IPR022919">
    <property type="entry name" value="Pept_M48_protease_HtpX"/>
</dbReference>
<dbReference type="InterPro" id="IPR001915">
    <property type="entry name" value="Peptidase_M48"/>
</dbReference>
<dbReference type="NCBIfam" id="NF003965">
    <property type="entry name" value="PRK05457.1"/>
    <property type="match status" value="1"/>
</dbReference>
<dbReference type="PANTHER" id="PTHR43221">
    <property type="entry name" value="PROTEASE HTPX"/>
    <property type="match status" value="1"/>
</dbReference>
<dbReference type="PANTHER" id="PTHR43221:SF1">
    <property type="entry name" value="PROTEASE HTPX"/>
    <property type="match status" value="1"/>
</dbReference>
<dbReference type="Pfam" id="PF01435">
    <property type="entry name" value="Peptidase_M48"/>
    <property type="match status" value="1"/>
</dbReference>
<accession>B3EPQ3</accession>